<keyword id="KW-0539">Nucleus</keyword>
<keyword id="KW-1185">Reference proteome</keyword>
<keyword id="KW-0677">Repeat</keyword>
<keyword id="KW-0813">Transport</keyword>
<keyword id="KW-0853">WD repeat</keyword>
<sequence>MSLFGQATTSTVSNATGDLKKDVEVAQPPEDSISDLAFSPQAEYLAASSWDSKVRIYEVQATGQSIGKALYEHQGPVLSVNWSRDGTKVASGSVDKSAKVFDIQTGQNQQVAAHDDAVRCVRFVEAMGTSPILATGSWDKTLKYWDLRQSTPIATVSLPERVYAMDCVHPLLTVATAERNICVINLSEPTKIFKLAMSPLKFQTRSLACFIKGDGYAIGSVEGRCAIQNIDEKNASQNFSFRCHRNQAGNSADVYSVNSIAFHPQYGTFSTAGSDGTFSFWDKDSHQRLKSYPNVGGTISCSTFNRTGDIFAYAISYDWSKGYTFNNAQLPNKIMLHPVPQDEIKPRPKKGR</sequence>
<comment type="function">
    <text evidence="1 4">Required for mitotic cell growth as well as for spore germination. Functions in cell cycle progression through trafficking of proteins required for mitosis. Has a role in the mRNA export process.</text>
</comment>
<comment type="subunit">
    <text evidence="1">Interacts with rpn15/dss1 and uap56.</text>
</comment>
<comment type="subcellular location">
    <subcellularLocation>
        <location evidence="2">Nucleus</location>
    </subcellularLocation>
    <text>Nuclear periphery.</text>
</comment>
<comment type="similarity">
    <text evidence="5">Belongs to the WD repeat rae1 family.</text>
</comment>
<organism>
    <name type="scientific">Schizosaccharomyces pombe (strain 972 / ATCC 24843)</name>
    <name type="common">Fission yeast</name>
    <dbReference type="NCBI Taxonomy" id="284812"/>
    <lineage>
        <taxon>Eukaryota</taxon>
        <taxon>Fungi</taxon>
        <taxon>Dikarya</taxon>
        <taxon>Ascomycota</taxon>
        <taxon>Taphrinomycotina</taxon>
        <taxon>Schizosaccharomycetes</taxon>
        <taxon>Schizosaccharomycetales</taxon>
        <taxon>Schizosaccharomycetaceae</taxon>
        <taxon>Schizosaccharomyces</taxon>
    </lineage>
</organism>
<feature type="chain" id="PRO_0000051182" description="Poly(A)+ RNA export protein">
    <location>
        <begin position="1"/>
        <end position="352"/>
    </location>
</feature>
<feature type="repeat" description="WD 1">
    <location>
        <begin position="28"/>
        <end position="58"/>
    </location>
</feature>
<feature type="repeat" description="WD 2">
    <location>
        <begin position="72"/>
        <end position="102"/>
    </location>
</feature>
<feature type="repeat" description="WD 3">
    <location>
        <begin position="113"/>
        <end position="146"/>
    </location>
</feature>
<feature type="repeat" description="WD 4">
    <location>
        <begin position="192"/>
        <end position="229"/>
    </location>
</feature>
<feature type="repeat" description="WD 5">
    <location>
        <begin position="252"/>
        <end position="282"/>
    </location>
</feature>
<feature type="mutagenesis site" description="Temperature-sensitive mutant that accumulates poly(A)+ RNA in the nucleus." evidence="3">
    <original>G</original>
    <variation>E</variation>
    <location>
        <position position="219"/>
    </location>
</feature>
<protein>
    <recommendedName>
        <fullName>Poly(A)+ RNA export protein</fullName>
    </recommendedName>
</protein>
<proteinExistence type="evidence at protein level"/>
<accession>P41838</accession>
<gene>
    <name type="primary">rae1</name>
    <name type="ORF">SPBC16A3.05c</name>
</gene>
<reference key="1">
    <citation type="journal article" date="1995" name="J. Biol. Chem.">
        <title>A mutation in the Schizosaccharomyces pombe rae1 gene causes defects in poly(A)+ RNA export and in the cytoskeleton.</title>
        <authorList>
            <person name="Brown J.A."/>
            <person name="Bharathi A."/>
            <person name="Ghosh A."/>
            <person name="Whalen W."/>
            <person name="Fitzgerald E."/>
            <person name="Dhar R."/>
        </authorList>
    </citation>
    <scope>NUCLEOTIDE SEQUENCE [GENOMIC DNA]</scope>
    <scope>MUTAGENESIS OF GLY-219</scope>
</reference>
<reference key="2">
    <citation type="journal article" date="2002" name="Nature">
        <title>The genome sequence of Schizosaccharomyces pombe.</title>
        <authorList>
            <person name="Wood V."/>
            <person name="Gwilliam R."/>
            <person name="Rajandream M.A."/>
            <person name="Lyne M.H."/>
            <person name="Lyne R."/>
            <person name="Stewart A."/>
            <person name="Sgouros J.G."/>
            <person name="Peat N."/>
            <person name="Hayles J."/>
            <person name="Baker S.G."/>
            <person name="Basham D."/>
            <person name="Bowman S."/>
            <person name="Brooks K."/>
            <person name="Brown D."/>
            <person name="Brown S."/>
            <person name="Chillingworth T."/>
            <person name="Churcher C.M."/>
            <person name="Collins M."/>
            <person name="Connor R."/>
            <person name="Cronin A."/>
            <person name="Davis P."/>
            <person name="Feltwell T."/>
            <person name="Fraser A."/>
            <person name="Gentles S."/>
            <person name="Goble A."/>
            <person name="Hamlin N."/>
            <person name="Harris D.E."/>
            <person name="Hidalgo J."/>
            <person name="Hodgson G."/>
            <person name="Holroyd S."/>
            <person name="Hornsby T."/>
            <person name="Howarth S."/>
            <person name="Huckle E.J."/>
            <person name="Hunt S."/>
            <person name="Jagels K."/>
            <person name="James K.D."/>
            <person name="Jones L."/>
            <person name="Jones M."/>
            <person name="Leather S."/>
            <person name="McDonald S."/>
            <person name="McLean J."/>
            <person name="Mooney P."/>
            <person name="Moule S."/>
            <person name="Mungall K.L."/>
            <person name="Murphy L.D."/>
            <person name="Niblett D."/>
            <person name="Odell C."/>
            <person name="Oliver K."/>
            <person name="O'Neil S."/>
            <person name="Pearson D."/>
            <person name="Quail M.A."/>
            <person name="Rabbinowitsch E."/>
            <person name="Rutherford K.M."/>
            <person name="Rutter S."/>
            <person name="Saunders D."/>
            <person name="Seeger K."/>
            <person name="Sharp S."/>
            <person name="Skelton J."/>
            <person name="Simmonds M.N."/>
            <person name="Squares R."/>
            <person name="Squares S."/>
            <person name="Stevens K."/>
            <person name="Taylor K."/>
            <person name="Taylor R.G."/>
            <person name="Tivey A."/>
            <person name="Walsh S.V."/>
            <person name="Warren T."/>
            <person name="Whitehead S."/>
            <person name="Woodward J.R."/>
            <person name="Volckaert G."/>
            <person name="Aert R."/>
            <person name="Robben J."/>
            <person name="Grymonprez B."/>
            <person name="Weltjens I."/>
            <person name="Vanstreels E."/>
            <person name="Rieger M."/>
            <person name="Schaefer M."/>
            <person name="Mueller-Auer S."/>
            <person name="Gabel C."/>
            <person name="Fuchs M."/>
            <person name="Duesterhoeft A."/>
            <person name="Fritzc C."/>
            <person name="Holzer E."/>
            <person name="Moestl D."/>
            <person name="Hilbert H."/>
            <person name="Borzym K."/>
            <person name="Langer I."/>
            <person name="Beck A."/>
            <person name="Lehrach H."/>
            <person name="Reinhardt R."/>
            <person name="Pohl T.M."/>
            <person name="Eger P."/>
            <person name="Zimmermann W."/>
            <person name="Wedler H."/>
            <person name="Wambutt R."/>
            <person name="Purnelle B."/>
            <person name="Goffeau A."/>
            <person name="Cadieu E."/>
            <person name="Dreano S."/>
            <person name="Gloux S."/>
            <person name="Lelaure V."/>
            <person name="Mottier S."/>
            <person name="Galibert F."/>
            <person name="Aves S.J."/>
            <person name="Xiang Z."/>
            <person name="Hunt C."/>
            <person name="Moore K."/>
            <person name="Hurst S.M."/>
            <person name="Lucas M."/>
            <person name="Rochet M."/>
            <person name="Gaillardin C."/>
            <person name="Tallada V.A."/>
            <person name="Garzon A."/>
            <person name="Thode G."/>
            <person name="Daga R.R."/>
            <person name="Cruzado L."/>
            <person name="Jimenez J."/>
            <person name="Sanchez M."/>
            <person name="del Rey F."/>
            <person name="Benito J."/>
            <person name="Dominguez A."/>
            <person name="Revuelta J.L."/>
            <person name="Moreno S."/>
            <person name="Armstrong J."/>
            <person name="Forsburg S.L."/>
            <person name="Cerutti L."/>
            <person name="Lowe T."/>
            <person name="McCombie W.R."/>
            <person name="Paulsen I."/>
            <person name="Potashkin J."/>
            <person name="Shpakovski G.V."/>
            <person name="Ussery D."/>
            <person name="Barrell B.G."/>
            <person name="Nurse P."/>
        </authorList>
    </citation>
    <scope>NUCLEOTIDE SEQUENCE [LARGE SCALE GENOMIC DNA]</scope>
    <source>
        <strain>972 / ATCC 24843</strain>
    </source>
</reference>
<reference key="3">
    <citation type="journal article" date="1997" name="Yeast">
        <title>Advancement through mitosis requires rae1 gene function in fission yeast.</title>
        <authorList>
            <person name="Whalen W.A."/>
            <person name="Bharathi A."/>
            <person name="Danielewicz D."/>
            <person name="Dhar R."/>
        </authorList>
    </citation>
    <scope>FUNCTION</scope>
</reference>
<reference key="4">
    <citation type="journal article" date="2005" name="EMBO J.">
        <title>Homolog of BRCA2-interacting Dss1p and Uap56p link Mlo3p and Rae1p for mRNA export in fission yeast.</title>
        <authorList>
            <person name="Thakurta A.G."/>
            <person name="Gopal G."/>
            <person name="Yoon J.H."/>
            <person name="Kozak L."/>
            <person name="Dhar R."/>
        </authorList>
    </citation>
    <scope>FUNCTION</scope>
    <scope>INTERACTION WITH RPN15 AND UAP56</scope>
</reference>
<reference key="5">
    <citation type="journal article" date="2006" name="Nat. Biotechnol.">
        <title>ORFeome cloning and global analysis of protein localization in the fission yeast Schizosaccharomyces pombe.</title>
        <authorList>
            <person name="Matsuyama A."/>
            <person name="Arai R."/>
            <person name="Yashiroda Y."/>
            <person name="Shirai A."/>
            <person name="Kamata A."/>
            <person name="Sekido S."/>
            <person name="Kobayashi Y."/>
            <person name="Hashimoto A."/>
            <person name="Hamamoto M."/>
            <person name="Hiraoka Y."/>
            <person name="Horinouchi S."/>
            <person name="Yoshida M."/>
        </authorList>
    </citation>
    <scope>SUBCELLULAR LOCATION [LARGE SCALE ANALYSIS]</scope>
</reference>
<name>RAE1_SCHPO</name>
<dbReference type="EMBL" id="U14951">
    <property type="protein sequence ID" value="AAA86311.1"/>
    <property type="molecule type" value="Genomic_DNA"/>
</dbReference>
<dbReference type="EMBL" id="CU329671">
    <property type="protein sequence ID" value="CAA16856.1"/>
    <property type="molecule type" value="Genomic_DNA"/>
</dbReference>
<dbReference type="PIR" id="A56119">
    <property type="entry name" value="A56119"/>
</dbReference>
<dbReference type="RefSeq" id="NP_596784.1">
    <property type="nucleotide sequence ID" value="NM_001023805.2"/>
</dbReference>
<dbReference type="SMR" id="P41838"/>
<dbReference type="BioGRID" id="276293">
    <property type="interactions" value="18"/>
</dbReference>
<dbReference type="DIP" id="DIP-59117N"/>
<dbReference type="FunCoup" id="P41838">
    <property type="interactions" value="1181"/>
</dbReference>
<dbReference type="IntAct" id="P41838">
    <property type="interactions" value="1"/>
</dbReference>
<dbReference type="STRING" id="284812.P41838"/>
<dbReference type="iPTMnet" id="P41838"/>
<dbReference type="SwissPalm" id="P41838"/>
<dbReference type="PaxDb" id="4896-SPBC16A3.05c.1"/>
<dbReference type="EnsemblFungi" id="SPBC16A3.05c.1">
    <property type="protein sequence ID" value="SPBC16A3.05c.1:pep"/>
    <property type="gene ID" value="SPBC16A3.05c"/>
</dbReference>
<dbReference type="GeneID" id="2539741"/>
<dbReference type="KEGG" id="spo:2539741"/>
<dbReference type="PomBase" id="SPBC16A3.05c">
    <property type="gene designation" value="rae1"/>
</dbReference>
<dbReference type="VEuPathDB" id="FungiDB:SPBC16A3.05c"/>
<dbReference type="eggNOG" id="KOG0647">
    <property type="taxonomic scope" value="Eukaryota"/>
</dbReference>
<dbReference type="HOGENOM" id="CLU_038526_1_0_1"/>
<dbReference type="InParanoid" id="P41838"/>
<dbReference type="OMA" id="EAMDQSI"/>
<dbReference type="PhylomeDB" id="P41838"/>
<dbReference type="Reactome" id="R-SPO-159227">
    <property type="pathway name" value="Transport of the SLBP independent Mature mRNA"/>
</dbReference>
<dbReference type="Reactome" id="R-SPO-159231">
    <property type="pathway name" value="Transport of Mature mRNA Derived from an Intronless Transcript"/>
</dbReference>
<dbReference type="Reactome" id="R-SPO-159236">
    <property type="pathway name" value="Transport of Mature mRNA derived from an Intron-Containing Transcript"/>
</dbReference>
<dbReference type="Reactome" id="R-SPO-3371453">
    <property type="pathway name" value="Regulation of HSF1-mediated heat shock response"/>
</dbReference>
<dbReference type="Reactome" id="R-SPO-4085377">
    <property type="pathway name" value="SUMOylation of SUMOylation proteins"/>
</dbReference>
<dbReference type="Reactome" id="R-SPO-4551638">
    <property type="pathway name" value="SUMOylation of chromatin organization proteins"/>
</dbReference>
<dbReference type="Reactome" id="R-SPO-4570464">
    <property type="pathway name" value="SUMOylation of RNA binding proteins"/>
</dbReference>
<dbReference type="Reactome" id="R-SPO-5578749">
    <property type="pathway name" value="Transcriptional regulation by small RNAs"/>
</dbReference>
<dbReference type="PRO" id="PR:P41838"/>
<dbReference type="Proteomes" id="UP000002485">
    <property type="component" value="Chromosome II"/>
</dbReference>
<dbReference type="GO" id="GO:0005829">
    <property type="term" value="C:cytosol"/>
    <property type="evidence" value="ECO:0000314"/>
    <property type="project" value="PomBase"/>
</dbReference>
<dbReference type="GO" id="GO:0005635">
    <property type="term" value="C:nuclear envelope"/>
    <property type="evidence" value="ECO:0007005"/>
    <property type="project" value="PomBase"/>
</dbReference>
<dbReference type="GO" id="GO:0034399">
    <property type="term" value="C:nuclear periphery"/>
    <property type="evidence" value="ECO:0000314"/>
    <property type="project" value="PomBase"/>
</dbReference>
<dbReference type="GO" id="GO:0005643">
    <property type="term" value="C:nuclear pore"/>
    <property type="evidence" value="ECO:0000314"/>
    <property type="project" value="PomBase"/>
</dbReference>
<dbReference type="GO" id="GO:0003723">
    <property type="term" value="F:RNA binding"/>
    <property type="evidence" value="ECO:0000318"/>
    <property type="project" value="GO_Central"/>
</dbReference>
<dbReference type="GO" id="GO:0043130">
    <property type="term" value="F:ubiquitin binding"/>
    <property type="evidence" value="ECO:0000318"/>
    <property type="project" value="GO_Central"/>
</dbReference>
<dbReference type="GO" id="GO:0006406">
    <property type="term" value="P:mRNA export from nucleus"/>
    <property type="evidence" value="ECO:0000316"/>
    <property type="project" value="PomBase"/>
</dbReference>
<dbReference type="GO" id="GO:0016973">
    <property type="term" value="P:poly(A)+ mRNA export from nucleus"/>
    <property type="evidence" value="ECO:0000315"/>
    <property type="project" value="PomBase"/>
</dbReference>
<dbReference type="GO" id="GO:0000054">
    <property type="term" value="P:ribosomal subunit export from nucleus"/>
    <property type="evidence" value="ECO:0000266"/>
    <property type="project" value="PomBase"/>
</dbReference>
<dbReference type="GO" id="GO:0006405">
    <property type="term" value="P:RNA export from nucleus"/>
    <property type="evidence" value="ECO:0000318"/>
    <property type="project" value="GO_Central"/>
</dbReference>
<dbReference type="GO" id="GO:0000972">
    <property type="term" value="P:transcription-dependent tethering of RNA polymerase II gene DNA at nuclear periphery"/>
    <property type="evidence" value="ECO:0000318"/>
    <property type="project" value="GO_Central"/>
</dbReference>
<dbReference type="FunFam" id="2.130.10.10:FF:000190">
    <property type="entry name" value="Nuclear pore complex subunit"/>
    <property type="match status" value="1"/>
</dbReference>
<dbReference type="Gene3D" id="2.130.10.10">
    <property type="entry name" value="YVTN repeat-like/Quinoprotein amine dehydrogenase"/>
    <property type="match status" value="1"/>
</dbReference>
<dbReference type="InterPro" id="IPR020472">
    <property type="entry name" value="G-protein_beta_WD-40_rep"/>
</dbReference>
<dbReference type="InterPro" id="IPR015943">
    <property type="entry name" value="WD40/YVTN_repeat-like_dom_sf"/>
</dbReference>
<dbReference type="InterPro" id="IPR036322">
    <property type="entry name" value="WD40_repeat_dom_sf"/>
</dbReference>
<dbReference type="InterPro" id="IPR001680">
    <property type="entry name" value="WD40_rpt"/>
</dbReference>
<dbReference type="PANTHER" id="PTHR10971">
    <property type="entry name" value="MRNA EXPORT FACTOR AND BUB3"/>
    <property type="match status" value="1"/>
</dbReference>
<dbReference type="Pfam" id="PF00400">
    <property type="entry name" value="WD40"/>
    <property type="match status" value="4"/>
</dbReference>
<dbReference type="PRINTS" id="PR00320">
    <property type="entry name" value="GPROTEINBRPT"/>
</dbReference>
<dbReference type="SMART" id="SM00320">
    <property type="entry name" value="WD40"/>
    <property type="match status" value="4"/>
</dbReference>
<dbReference type="SUPFAM" id="SSF50978">
    <property type="entry name" value="WD40 repeat-like"/>
    <property type="match status" value="1"/>
</dbReference>
<dbReference type="PROSITE" id="PS50082">
    <property type="entry name" value="WD_REPEATS_2"/>
    <property type="match status" value="4"/>
</dbReference>
<dbReference type="PROSITE" id="PS50294">
    <property type="entry name" value="WD_REPEATS_REGION"/>
    <property type="match status" value="2"/>
</dbReference>
<evidence type="ECO:0000269" key="1">
    <source>
    </source>
</evidence>
<evidence type="ECO:0000269" key="2">
    <source>
    </source>
</evidence>
<evidence type="ECO:0000269" key="3">
    <source>
    </source>
</evidence>
<evidence type="ECO:0000269" key="4">
    <source>
    </source>
</evidence>
<evidence type="ECO:0000305" key="5"/>